<dbReference type="EMBL" id="AE014296">
    <property type="protein sequence ID" value="AAF49322.2"/>
    <property type="molecule type" value="Genomic_DNA"/>
</dbReference>
<dbReference type="EMBL" id="AY071206">
    <property type="protein sequence ID" value="AAL48828.1"/>
    <property type="molecule type" value="mRNA"/>
</dbReference>
<dbReference type="RefSeq" id="NP_001261994.1">
    <property type="nucleotide sequence ID" value="NM_001275065.1"/>
</dbReference>
<dbReference type="RefSeq" id="NP_648997.1">
    <property type="nucleotide sequence ID" value="NM_140740.4"/>
</dbReference>
<dbReference type="SMR" id="Q9VVI9"/>
<dbReference type="BioGRID" id="65251">
    <property type="interactions" value="19"/>
</dbReference>
<dbReference type="ComplexPortal" id="CPX-2459">
    <property type="entry name" value="ESCRT-III complex"/>
</dbReference>
<dbReference type="FunCoup" id="Q9VVI9">
    <property type="interactions" value="2159"/>
</dbReference>
<dbReference type="IntAct" id="Q9VVI9">
    <property type="interactions" value="37"/>
</dbReference>
<dbReference type="STRING" id="7227.FBpp0305334"/>
<dbReference type="GlyGen" id="Q9VVI9">
    <property type="glycosylation" value="1 site, 1 O-linked glycan (1 site)"/>
</dbReference>
<dbReference type="iPTMnet" id="Q9VVI9"/>
<dbReference type="PaxDb" id="7227-FBpp0305334"/>
<dbReference type="DNASU" id="39964"/>
<dbReference type="EnsemblMetazoa" id="FBtr0075201">
    <property type="protein sequence ID" value="FBpp0074964"/>
    <property type="gene ID" value="FBgn0036740"/>
</dbReference>
<dbReference type="EnsemblMetazoa" id="FBtr0333123">
    <property type="protein sequence ID" value="FBpp0305334"/>
    <property type="gene ID" value="FBgn0036740"/>
</dbReference>
<dbReference type="GeneID" id="39964"/>
<dbReference type="KEGG" id="dme:Dmel_CG6259"/>
<dbReference type="UCSC" id="CG6259-RA">
    <property type="organism name" value="d. melanogaster"/>
</dbReference>
<dbReference type="AGR" id="FB:FBgn0036740"/>
<dbReference type="CTD" id="39964"/>
<dbReference type="FlyBase" id="FBgn0036740">
    <property type="gene designation" value="Vps60"/>
</dbReference>
<dbReference type="VEuPathDB" id="VectorBase:FBgn0036740"/>
<dbReference type="eggNOG" id="KOG1655">
    <property type="taxonomic scope" value="Eukaryota"/>
</dbReference>
<dbReference type="GeneTree" id="ENSGT00550000074817"/>
<dbReference type="HOGENOM" id="CLU_079409_1_0_1"/>
<dbReference type="InParanoid" id="Q9VVI9"/>
<dbReference type="OMA" id="GVKQMQK"/>
<dbReference type="OrthoDB" id="3973241at2759"/>
<dbReference type="PhylomeDB" id="Q9VVI9"/>
<dbReference type="Reactome" id="R-DME-917729">
    <property type="pathway name" value="Endosomal Sorting Complex Required For Transport (ESCRT)"/>
</dbReference>
<dbReference type="SignaLink" id="Q9VVI9"/>
<dbReference type="BioGRID-ORCS" id="39964">
    <property type="hits" value="0 hits in 1 CRISPR screen"/>
</dbReference>
<dbReference type="GenomeRNAi" id="39964"/>
<dbReference type="PRO" id="PR:Q9VVI9"/>
<dbReference type="Proteomes" id="UP000000803">
    <property type="component" value="Chromosome 3L"/>
</dbReference>
<dbReference type="Bgee" id="FBgn0036740">
    <property type="expression patterns" value="Expressed in adult enteroendocrine precursor cell in adult midgut (Drosophila) and 159 other cell types or tissues"/>
</dbReference>
<dbReference type="ExpressionAtlas" id="Q9VVI9">
    <property type="expression patterns" value="baseline and differential"/>
</dbReference>
<dbReference type="GO" id="GO:0000815">
    <property type="term" value="C:ESCRT III complex"/>
    <property type="evidence" value="ECO:0000303"/>
    <property type="project" value="FlyBase"/>
</dbReference>
<dbReference type="GO" id="GO:0005771">
    <property type="term" value="C:multivesicular body"/>
    <property type="evidence" value="ECO:0000318"/>
    <property type="project" value="GO_Central"/>
</dbReference>
<dbReference type="GO" id="GO:0032509">
    <property type="term" value="P:endosome transport via multivesicular body sorting pathway"/>
    <property type="evidence" value="ECO:0000250"/>
    <property type="project" value="FlyBase"/>
</dbReference>
<dbReference type="GO" id="GO:0032511">
    <property type="term" value="P:late endosome to vacuole transport via multivesicular body sorting pathway"/>
    <property type="evidence" value="ECO:0000318"/>
    <property type="project" value="GO_Central"/>
</dbReference>
<dbReference type="GO" id="GO:0015031">
    <property type="term" value="P:protein transport"/>
    <property type="evidence" value="ECO:0007669"/>
    <property type="project" value="UniProtKB-KW"/>
</dbReference>
<dbReference type="GO" id="GO:0046718">
    <property type="term" value="P:symbiont entry into host cell"/>
    <property type="evidence" value="ECO:0007001"/>
    <property type="project" value="FlyBase"/>
</dbReference>
<dbReference type="GO" id="GO:0006900">
    <property type="term" value="P:vesicle budding from membrane"/>
    <property type="evidence" value="ECO:0000318"/>
    <property type="project" value="GO_Central"/>
</dbReference>
<dbReference type="Gene3D" id="6.10.250.1710">
    <property type="match status" value="1"/>
</dbReference>
<dbReference type="Gene3D" id="1.10.287.1060">
    <property type="entry name" value="ESAT-6-like"/>
    <property type="match status" value="1"/>
</dbReference>
<dbReference type="InterPro" id="IPR005024">
    <property type="entry name" value="Snf7_fam"/>
</dbReference>
<dbReference type="PANTHER" id="PTHR22761">
    <property type="entry name" value="CHARGED MULTIVESICULAR BODY PROTEIN"/>
    <property type="match status" value="1"/>
</dbReference>
<dbReference type="PANTHER" id="PTHR22761:SF12">
    <property type="entry name" value="CHARGED MULTIVESICULAR BODY PROTEIN 5"/>
    <property type="match status" value="1"/>
</dbReference>
<dbReference type="Pfam" id="PF03357">
    <property type="entry name" value="Snf7"/>
    <property type="match status" value="1"/>
</dbReference>
<sequence length="226" mass="25151">MNRLFGRGKPKEPGPSLNDCIAGVDARATNIEEKISNLEAELRKYREQMSKMREGPAKNSVKQKALRVLKQKKAYEQQAESLRNQSFNMEQANYAAQSLKDTQATVAAMKDGVKQMKTEYKKINIDQIEDIQDDMADMFEQADEVQEALGRTYGMPEVDDDDLQAELDALGDEIALDDDTSYLDDVVKAPEAPSREPGADSIVPGKSTIETDEFGLPKIPTSLKTT</sequence>
<evidence type="ECO:0000250" key="1"/>
<evidence type="ECO:0000250" key="2">
    <source>
        <dbReference type="UniProtKB" id="Q9BY43"/>
    </source>
</evidence>
<evidence type="ECO:0000255" key="3"/>
<evidence type="ECO:0000256" key="4">
    <source>
        <dbReference type="SAM" id="MobiDB-lite"/>
    </source>
</evidence>
<evidence type="ECO:0000269" key="5">
    <source>
    </source>
</evidence>
<evidence type="ECO:0000269" key="6">
    <source>
    </source>
</evidence>
<evidence type="ECO:0000269" key="7">
    <source>
    </source>
</evidence>
<evidence type="ECO:0000305" key="8"/>
<evidence type="ECO:0000312" key="9">
    <source>
        <dbReference type="FlyBase" id="FBgn0036740"/>
    </source>
</evidence>
<reference key="1">
    <citation type="journal article" date="2000" name="Science">
        <title>The genome sequence of Drosophila melanogaster.</title>
        <authorList>
            <person name="Adams M.D."/>
            <person name="Celniker S.E."/>
            <person name="Holt R.A."/>
            <person name="Evans C.A."/>
            <person name="Gocayne J.D."/>
            <person name="Amanatides P.G."/>
            <person name="Scherer S.E."/>
            <person name="Li P.W."/>
            <person name="Hoskins R.A."/>
            <person name="Galle R.F."/>
            <person name="George R.A."/>
            <person name="Lewis S.E."/>
            <person name="Richards S."/>
            <person name="Ashburner M."/>
            <person name="Henderson S.N."/>
            <person name="Sutton G.G."/>
            <person name="Wortman J.R."/>
            <person name="Yandell M.D."/>
            <person name="Zhang Q."/>
            <person name="Chen L.X."/>
            <person name="Brandon R.C."/>
            <person name="Rogers Y.-H.C."/>
            <person name="Blazej R.G."/>
            <person name="Champe M."/>
            <person name="Pfeiffer B.D."/>
            <person name="Wan K.H."/>
            <person name="Doyle C."/>
            <person name="Baxter E.G."/>
            <person name="Helt G."/>
            <person name="Nelson C.R."/>
            <person name="Miklos G.L.G."/>
            <person name="Abril J.F."/>
            <person name="Agbayani A."/>
            <person name="An H.-J."/>
            <person name="Andrews-Pfannkoch C."/>
            <person name="Baldwin D."/>
            <person name="Ballew R.M."/>
            <person name="Basu A."/>
            <person name="Baxendale J."/>
            <person name="Bayraktaroglu L."/>
            <person name="Beasley E.M."/>
            <person name="Beeson K.Y."/>
            <person name="Benos P.V."/>
            <person name="Berman B.P."/>
            <person name="Bhandari D."/>
            <person name="Bolshakov S."/>
            <person name="Borkova D."/>
            <person name="Botchan M.R."/>
            <person name="Bouck J."/>
            <person name="Brokstein P."/>
            <person name="Brottier P."/>
            <person name="Burtis K.C."/>
            <person name="Busam D.A."/>
            <person name="Butler H."/>
            <person name="Cadieu E."/>
            <person name="Center A."/>
            <person name="Chandra I."/>
            <person name="Cherry J.M."/>
            <person name="Cawley S."/>
            <person name="Dahlke C."/>
            <person name="Davenport L.B."/>
            <person name="Davies P."/>
            <person name="de Pablos B."/>
            <person name="Delcher A."/>
            <person name="Deng Z."/>
            <person name="Mays A.D."/>
            <person name="Dew I."/>
            <person name="Dietz S.M."/>
            <person name="Dodson K."/>
            <person name="Doup L.E."/>
            <person name="Downes M."/>
            <person name="Dugan-Rocha S."/>
            <person name="Dunkov B.C."/>
            <person name="Dunn P."/>
            <person name="Durbin K.J."/>
            <person name="Evangelista C.C."/>
            <person name="Ferraz C."/>
            <person name="Ferriera S."/>
            <person name="Fleischmann W."/>
            <person name="Fosler C."/>
            <person name="Gabrielian A.E."/>
            <person name="Garg N.S."/>
            <person name="Gelbart W.M."/>
            <person name="Glasser K."/>
            <person name="Glodek A."/>
            <person name="Gong F."/>
            <person name="Gorrell J.H."/>
            <person name="Gu Z."/>
            <person name="Guan P."/>
            <person name="Harris M."/>
            <person name="Harris N.L."/>
            <person name="Harvey D.A."/>
            <person name="Heiman T.J."/>
            <person name="Hernandez J.R."/>
            <person name="Houck J."/>
            <person name="Hostin D."/>
            <person name="Houston K.A."/>
            <person name="Howland T.J."/>
            <person name="Wei M.-H."/>
            <person name="Ibegwam C."/>
            <person name="Jalali M."/>
            <person name="Kalush F."/>
            <person name="Karpen G.H."/>
            <person name="Ke Z."/>
            <person name="Kennison J.A."/>
            <person name="Ketchum K.A."/>
            <person name="Kimmel B.E."/>
            <person name="Kodira C.D."/>
            <person name="Kraft C.L."/>
            <person name="Kravitz S."/>
            <person name="Kulp D."/>
            <person name="Lai Z."/>
            <person name="Lasko P."/>
            <person name="Lei Y."/>
            <person name="Levitsky A.A."/>
            <person name="Li J.H."/>
            <person name="Li Z."/>
            <person name="Liang Y."/>
            <person name="Lin X."/>
            <person name="Liu X."/>
            <person name="Mattei B."/>
            <person name="McIntosh T.C."/>
            <person name="McLeod M.P."/>
            <person name="McPherson D."/>
            <person name="Merkulov G."/>
            <person name="Milshina N.V."/>
            <person name="Mobarry C."/>
            <person name="Morris J."/>
            <person name="Moshrefi A."/>
            <person name="Mount S.M."/>
            <person name="Moy M."/>
            <person name="Murphy B."/>
            <person name="Murphy L."/>
            <person name="Muzny D.M."/>
            <person name="Nelson D.L."/>
            <person name="Nelson D.R."/>
            <person name="Nelson K.A."/>
            <person name="Nixon K."/>
            <person name="Nusskern D.R."/>
            <person name="Pacleb J.M."/>
            <person name="Palazzolo M."/>
            <person name="Pittman G.S."/>
            <person name="Pan S."/>
            <person name="Pollard J."/>
            <person name="Puri V."/>
            <person name="Reese M.G."/>
            <person name="Reinert K."/>
            <person name="Remington K."/>
            <person name="Saunders R.D.C."/>
            <person name="Scheeler F."/>
            <person name="Shen H."/>
            <person name="Shue B.C."/>
            <person name="Siden-Kiamos I."/>
            <person name="Simpson M."/>
            <person name="Skupski M.P."/>
            <person name="Smith T.J."/>
            <person name="Spier E."/>
            <person name="Spradling A.C."/>
            <person name="Stapleton M."/>
            <person name="Strong R."/>
            <person name="Sun E."/>
            <person name="Svirskas R."/>
            <person name="Tector C."/>
            <person name="Turner R."/>
            <person name="Venter E."/>
            <person name="Wang A.H."/>
            <person name="Wang X."/>
            <person name="Wang Z.-Y."/>
            <person name="Wassarman D.A."/>
            <person name="Weinstock G.M."/>
            <person name="Weissenbach J."/>
            <person name="Williams S.M."/>
            <person name="Woodage T."/>
            <person name="Worley K.C."/>
            <person name="Wu D."/>
            <person name="Yang S."/>
            <person name="Yao Q.A."/>
            <person name="Ye J."/>
            <person name="Yeh R.-F."/>
            <person name="Zaveri J.S."/>
            <person name="Zhan M."/>
            <person name="Zhang G."/>
            <person name="Zhao Q."/>
            <person name="Zheng L."/>
            <person name="Zheng X.H."/>
            <person name="Zhong F.N."/>
            <person name="Zhong W."/>
            <person name="Zhou X."/>
            <person name="Zhu S.C."/>
            <person name="Zhu X."/>
            <person name="Smith H.O."/>
            <person name="Gibbs R.A."/>
            <person name="Myers E.W."/>
            <person name="Rubin G.M."/>
            <person name="Venter J.C."/>
        </authorList>
    </citation>
    <scope>NUCLEOTIDE SEQUENCE [LARGE SCALE GENOMIC DNA]</scope>
    <source>
        <strain>Berkeley</strain>
    </source>
</reference>
<reference key="2">
    <citation type="journal article" date="2002" name="Genome Biol.">
        <title>Annotation of the Drosophila melanogaster euchromatic genome: a systematic review.</title>
        <authorList>
            <person name="Misra S."/>
            <person name="Crosby M.A."/>
            <person name="Mungall C.J."/>
            <person name="Matthews B.B."/>
            <person name="Campbell K.S."/>
            <person name="Hradecky P."/>
            <person name="Huang Y."/>
            <person name="Kaminker J.S."/>
            <person name="Millburn G.H."/>
            <person name="Prochnik S.E."/>
            <person name="Smith C.D."/>
            <person name="Tupy J.L."/>
            <person name="Whitfield E.J."/>
            <person name="Bayraktaroglu L."/>
            <person name="Berman B.P."/>
            <person name="Bettencourt B.R."/>
            <person name="Celniker S.E."/>
            <person name="de Grey A.D.N.J."/>
            <person name="Drysdale R.A."/>
            <person name="Harris N.L."/>
            <person name="Richter J."/>
            <person name="Russo S."/>
            <person name="Schroeder A.J."/>
            <person name="Shu S.Q."/>
            <person name="Stapleton M."/>
            <person name="Yamada C."/>
            <person name="Ashburner M."/>
            <person name="Gelbart W.M."/>
            <person name="Rubin G.M."/>
            <person name="Lewis S.E."/>
        </authorList>
    </citation>
    <scope>GENOME REANNOTATION</scope>
    <source>
        <strain>Berkeley</strain>
    </source>
</reference>
<reference key="3">
    <citation type="submission" date="2003-08" db="EMBL/GenBank/DDBJ databases">
        <authorList>
            <person name="Stapleton M."/>
            <person name="Brokstein P."/>
            <person name="Hong L."/>
            <person name="Agbayani A."/>
            <person name="Carlson J.W."/>
            <person name="Champe M."/>
            <person name="Chavez C."/>
            <person name="Dorsett V."/>
            <person name="Dresnek D."/>
            <person name="Farfan D."/>
            <person name="Frise E."/>
            <person name="George R.A."/>
            <person name="Gonzalez M."/>
            <person name="Guarin H."/>
            <person name="Kronmiller B."/>
            <person name="Li P.W."/>
            <person name="Liao G."/>
            <person name="Miranda A."/>
            <person name="Mungall C.J."/>
            <person name="Nunoo J."/>
            <person name="Pacleb J.M."/>
            <person name="Paragas V."/>
            <person name="Park S."/>
            <person name="Patel S."/>
            <person name="Phouanenavong S."/>
            <person name="Wan K.H."/>
            <person name="Yu C."/>
            <person name="Lewis S.E."/>
            <person name="Rubin G.M."/>
            <person name="Celniker S.E."/>
        </authorList>
    </citation>
    <scope>NUCLEOTIDE SEQUENCE [LARGE SCALE MRNA]</scope>
    <source>
        <strain>Berkeley</strain>
        <tissue>Embryo</tissue>
    </source>
</reference>
<reference key="4">
    <citation type="journal article" date="2007" name="Mol. Biosyst.">
        <title>An integrated chemical, mass spectrometric and computational strategy for (quantitative) phosphoproteomics: application to Drosophila melanogaster Kc167 cells.</title>
        <authorList>
            <person name="Bodenmiller B."/>
            <person name="Mueller L.N."/>
            <person name="Pedrioli P.G.A."/>
            <person name="Pflieger D."/>
            <person name="Juenger M.A."/>
            <person name="Eng J.K."/>
            <person name="Aebersold R."/>
            <person name="Tao W.A."/>
        </authorList>
    </citation>
    <scope>PHOSPHORYLATION [LARGE SCALE ANALYSIS] AT SER-201</scope>
    <scope>IDENTIFICATION BY MASS SPECTROMETRY</scope>
</reference>
<reference key="5">
    <citation type="journal article" date="2008" name="J. Proteome Res.">
        <title>Phosphoproteome analysis of Drosophila melanogaster embryos.</title>
        <authorList>
            <person name="Zhai B."/>
            <person name="Villen J."/>
            <person name="Beausoleil S.A."/>
            <person name="Mintseris J."/>
            <person name="Gygi S.P."/>
        </authorList>
    </citation>
    <scope>PHOSPHORYLATION [LARGE SCALE ANALYSIS] AT THR-226</scope>
    <scope>IDENTIFICATION BY MASS SPECTROMETRY</scope>
    <source>
        <tissue>Embryo</tissue>
    </source>
</reference>
<reference key="6">
    <citation type="journal article" date="2014" name="J. Cell Sci.">
        <title>A genome-scale in vivo RNAi analysis of epithelial development in Drosophila identifies new proliferation domains outside of the stem cell niche.</title>
        <authorList>
            <person name="Berns N."/>
            <person name="Woichansky I."/>
            <person name="Friedrichsen S."/>
            <person name="Kraft N."/>
            <person name="Riechmann V."/>
        </authorList>
    </citation>
    <scope>FUNCTION</scope>
    <scope>DISRUPTION PHENOTYPE</scope>
</reference>
<accession>Q9VVI9</accession>
<feature type="chain" id="PRO_0000372645" description="Charged multivesicular body protein 5">
    <location>
        <begin position="1"/>
        <end position="226"/>
    </location>
</feature>
<feature type="region of interest" description="Disordered" evidence="4">
    <location>
        <begin position="188"/>
        <end position="226"/>
    </location>
</feature>
<feature type="coiled-coil region" evidence="3">
    <location>
        <begin position="21"/>
        <end position="93"/>
    </location>
</feature>
<feature type="compositionally biased region" description="Basic and acidic residues" evidence="4">
    <location>
        <begin position="188"/>
        <end position="198"/>
    </location>
</feature>
<feature type="modified residue" description="Phosphoserine" evidence="5">
    <location>
        <position position="201"/>
    </location>
</feature>
<feature type="modified residue" description="Phosphothreonine" evidence="6">
    <location>
        <position position="226"/>
    </location>
</feature>
<organism>
    <name type="scientific">Drosophila melanogaster</name>
    <name type="common">Fruit fly</name>
    <dbReference type="NCBI Taxonomy" id="7227"/>
    <lineage>
        <taxon>Eukaryota</taxon>
        <taxon>Metazoa</taxon>
        <taxon>Ecdysozoa</taxon>
        <taxon>Arthropoda</taxon>
        <taxon>Hexapoda</taxon>
        <taxon>Insecta</taxon>
        <taxon>Pterygota</taxon>
        <taxon>Neoptera</taxon>
        <taxon>Endopterygota</taxon>
        <taxon>Diptera</taxon>
        <taxon>Brachycera</taxon>
        <taxon>Muscomorpha</taxon>
        <taxon>Ephydroidea</taxon>
        <taxon>Drosophilidae</taxon>
        <taxon>Drosophila</taxon>
        <taxon>Sophophora</taxon>
    </lineage>
</organism>
<comment type="function">
    <text evidence="2 7">Probable peripherally associated component of the endosomal sorting required for transport complex III (ESCRT-III) which is involved in multivesicular bodies (MVBs) formation and sorting of endosomal cargo proteins into MVBs. MVBs contain intraluminal vesicles (ILVs) that are generated by invagination and scission from the limiting membrane of the endosome and are delivered to lysosomes enabling degradation of membrane proteins (By similarity). Specifically down-regulates Notch signaling activity in the germarium, probably by facilitating Notch endocytosis (PubMed:24762813).</text>
</comment>
<comment type="subunit">
    <text evidence="1">Probable peripherally associated component of the endosomal sorting required for transport complex III (ESCRT-III).</text>
</comment>
<comment type="subcellular location">
    <subcellularLocation>
        <location evidence="1">Endosome membrane</location>
        <topology evidence="1">Peripheral membrane protein</topology>
    </subcellularLocation>
</comment>
<comment type="disruption phenotype">
    <text evidence="7">Homozygous lethal. RNAi-mediated knockdown in ovarian follicle epithelium results in cell proliferation in the germarium epithelium. Stalks between adjacent egg chambers/ follicles become elongated due to increased number of cells and the linear arrangement of germline cysts is also disturbed.</text>
</comment>
<comment type="similarity">
    <text evidence="8">Belongs to the SNF7 family.</text>
</comment>
<proteinExistence type="evidence at protein level"/>
<gene>
    <name evidence="9" type="primary">Vps60</name>
    <name evidence="9" type="ORF">CG6259</name>
</gene>
<name>CHMP5_DROME</name>
<keyword id="KW-0175">Coiled coil</keyword>
<keyword id="KW-0967">Endosome</keyword>
<keyword id="KW-0472">Membrane</keyword>
<keyword id="KW-0597">Phosphoprotein</keyword>
<keyword id="KW-0653">Protein transport</keyword>
<keyword id="KW-1185">Reference proteome</keyword>
<keyword id="KW-0813">Transport</keyword>
<protein>
    <recommendedName>
        <fullName>Charged multivesicular body protein 5</fullName>
    </recommendedName>
    <alternativeName>
        <fullName evidence="9">Vacuolar protein-sorting-associated protein 60</fullName>
    </alternativeName>
</protein>